<accession>P34844</accession>
<reference key="1">
    <citation type="journal article" date="1993" name="Insect Mol. Biol.">
        <title>The mitochondrial genome of the mosquito Anopheles gambiae: DNA sequence, genome organization, and comparisons with mitochondrial sequences of other insects.</title>
        <authorList>
            <person name="Beard C.B."/>
            <person name="Hamm D.M."/>
            <person name="Collins F.H."/>
        </authorList>
    </citation>
    <scope>NUCLEOTIDE SEQUENCE [LARGE SCALE GENOMIC DNA]</scope>
    <source>
        <strain>G3</strain>
    </source>
</reference>
<keyword id="KW-0249">Electron transport</keyword>
<keyword id="KW-0349">Heme</keyword>
<keyword id="KW-0408">Iron</keyword>
<keyword id="KW-0472">Membrane</keyword>
<keyword id="KW-0479">Metal-binding</keyword>
<keyword id="KW-0496">Mitochondrion</keyword>
<keyword id="KW-0999">Mitochondrion inner membrane</keyword>
<keyword id="KW-1185">Reference proteome</keyword>
<keyword id="KW-0679">Respiratory chain</keyword>
<keyword id="KW-0812">Transmembrane</keyword>
<keyword id="KW-1133">Transmembrane helix</keyword>
<keyword id="KW-0813">Transport</keyword>
<keyword id="KW-0830">Ubiquinone</keyword>
<dbReference type="EMBL" id="L20934">
    <property type="protein sequence ID" value="AAD12201.1"/>
    <property type="molecule type" value="Genomic_DNA"/>
</dbReference>
<dbReference type="PIR" id="T09812">
    <property type="entry name" value="T09812"/>
</dbReference>
<dbReference type="RefSeq" id="NP_008080.1">
    <property type="nucleotide sequence ID" value="NC_002084.1"/>
</dbReference>
<dbReference type="SMR" id="P34844"/>
<dbReference type="FunCoup" id="P34844">
    <property type="interactions" value="138"/>
</dbReference>
<dbReference type="STRING" id="7165.P34844"/>
<dbReference type="PaxDb" id="7165-AGAP028387-PA"/>
<dbReference type="EnsemblMetazoa" id="AGAP028387-RA">
    <property type="protein sequence ID" value="AGAP028387-PA"/>
    <property type="gene ID" value="AGAP028387"/>
</dbReference>
<dbReference type="VEuPathDB" id="VectorBase:AGAMI1_012470"/>
<dbReference type="VEuPathDB" id="VectorBase:AGAP028387"/>
<dbReference type="eggNOG" id="KOG4663">
    <property type="taxonomic scope" value="Eukaryota"/>
</dbReference>
<dbReference type="HOGENOM" id="CLU_031114_3_0_1"/>
<dbReference type="InParanoid" id="P34844"/>
<dbReference type="OMA" id="NISAWWN"/>
<dbReference type="Proteomes" id="UP000007062">
    <property type="component" value="Mitochondrion"/>
</dbReference>
<dbReference type="GO" id="GO:0016020">
    <property type="term" value="C:membrane"/>
    <property type="evidence" value="ECO:0000318"/>
    <property type="project" value="GO_Central"/>
</dbReference>
<dbReference type="GO" id="GO:0005743">
    <property type="term" value="C:mitochondrial inner membrane"/>
    <property type="evidence" value="ECO:0007669"/>
    <property type="project" value="UniProtKB-SubCell"/>
</dbReference>
<dbReference type="GO" id="GO:0045275">
    <property type="term" value="C:respiratory chain complex III"/>
    <property type="evidence" value="ECO:0000318"/>
    <property type="project" value="GO_Central"/>
</dbReference>
<dbReference type="GO" id="GO:0046872">
    <property type="term" value="F:metal ion binding"/>
    <property type="evidence" value="ECO:0007669"/>
    <property type="project" value="UniProtKB-KW"/>
</dbReference>
<dbReference type="GO" id="GO:0008121">
    <property type="term" value="F:ubiquinol-cytochrome-c reductase activity"/>
    <property type="evidence" value="ECO:0007669"/>
    <property type="project" value="InterPro"/>
</dbReference>
<dbReference type="GO" id="GO:0006122">
    <property type="term" value="P:mitochondrial electron transport, ubiquinol to cytochrome c"/>
    <property type="evidence" value="ECO:0000318"/>
    <property type="project" value="GO_Central"/>
</dbReference>
<dbReference type="CDD" id="cd00290">
    <property type="entry name" value="cytochrome_b_C"/>
    <property type="match status" value="1"/>
</dbReference>
<dbReference type="CDD" id="cd00284">
    <property type="entry name" value="Cytochrome_b_N"/>
    <property type="match status" value="1"/>
</dbReference>
<dbReference type="FunFam" id="1.20.810.10:FF:000002">
    <property type="entry name" value="Cytochrome b"/>
    <property type="match status" value="1"/>
</dbReference>
<dbReference type="Gene3D" id="1.20.810.10">
    <property type="entry name" value="Cytochrome Bc1 Complex, Chain C"/>
    <property type="match status" value="1"/>
</dbReference>
<dbReference type="InterPro" id="IPR005798">
    <property type="entry name" value="Cyt_b/b6_C"/>
</dbReference>
<dbReference type="InterPro" id="IPR036150">
    <property type="entry name" value="Cyt_b/b6_C_sf"/>
</dbReference>
<dbReference type="InterPro" id="IPR005797">
    <property type="entry name" value="Cyt_b/b6_N"/>
</dbReference>
<dbReference type="InterPro" id="IPR027387">
    <property type="entry name" value="Cytb/b6-like_sf"/>
</dbReference>
<dbReference type="InterPro" id="IPR030689">
    <property type="entry name" value="Cytochrome_b"/>
</dbReference>
<dbReference type="InterPro" id="IPR048260">
    <property type="entry name" value="Cytochrome_b_C_euk/bac"/>
</dbReference>
<dbReference type="InterPro" id="IPR048259">
    <property type="entry name" value="Cytochrome_b_N_euk/bac"/>
</dbReference>
<dbReference type="InterPro" id="IPR016174">
    <property type="entry name" value="Di-haem_cyt_TM"/>
</dbReference>
<dbReference type="PANTHER" id="PTHR19271">
    <property type="entry name" value="CYTOCHROME B"/>
    <property type="match status" value="1"/>
</dbReference>
<dbReference type="PANTHER" id="PTHR19271:SF16">
    <property type="entry name" value="CYTOCHROME B"/>
    <property type="match status" value="1"/>
</dbReference>
<dbReference type="Pfam" id="PF00032">
    <property type="entry name" value="Cytochrom_B_C"/>
    <property type="match status" value="1"/>
</dbReference>
<dbReference type="Pfam" id="PF00033">
    <property type="entry name" value="Cytochrome_B"/>
    <property type="match status" value="1"/>
</dbReference>
<dbReference type="PIRSF" id="PIRSF038885">
    <property type="entry name" value="COB"/>
    <property type="match status" value="1"/>
</dbReference>
<dbReference type="SUPFAM" id="SSF81648">
    <property type="entry name" value="a domain/subunit of cytochrome bc1 complex (Ubiquinol-cytochrome c reductase)"/>
    <property type="match status" value="1"/>
</dbReference>
<dbReference type="SUPFAM" id="SSF81342">
    <property type="entry name" value="Transmembrane di-heme cytochromes"/>
    <property type="match status" value="1"/>
</dbReference>
<dbReference type="PROSITE" id="PS51003">
    <property type="entry name" value="CYTB_CTER"/>
    <property type="match status" value="1"/>
</dbReference>
<dbReference type="PROSITE" id="PS51002">
    <property type="entry name" value="CYTB_NTER"/>
    <property type="match status" value="1"/>
</dbReference>
<proteinExistence type="inferred from homology"/>
<gene>
    <name type="primary">mt:Cyt-b</name>
    <name type="synonym">COB</name>
    <name type="synonym">CYTB</name>
    <name type="synonym">MT-CYB</name>
    <name type="synonym">MTCYB</name>
</gene>
<organism>
    <name type="scientific">Anopheles gambiae</name>
    <name type="common">African malaria mosquito</name>
    <dbReference type="NCBI Taxonomy" id="7165"/>
    <lineage>
        <taxon>Eukaryota</taxon>
        <taxon>Metazoa</taxon>
        <taxon>Ecdysozoa</taxon>
        <taxon>Arthropoda</taxon>
        <taxon>Hexapoda</taxon>
        <taxon>Insecta</taxon>
        <taxon>Pterygota</taxon>
        <taxon>Neoptera</taxon>
        <taxon>Endopterygota</taxon>
        <taxon>Diptera</taxon>
        <taxon>Nematocera</taxon>
        <taxon>Culicoidea</taxon>
        <taxon>Culicidae</taxon>
        <taxon>Anophelinae</taxon>
        <taxon>Anopheles</taxon>
    </lineage>
</organism>
<name>CYB_ANOGA</name>
<evidence type="ECO:0000250" key="1"/>
<evidence type="ECO:0000250" key="2">
    <source>
        <dbReference type="UniProtKB" id="P00157"/>
    </source>
</evidence>
<evidence type="ECO:0000250" key="3">
    <source>
        <dbReference type="UniProtKB" id="P00163"/>
    </source>
</evidence>
<evidence type="ECO:0000255" key="4">
    <source>
        <dbReference type="PROSITE-ProRule" id="PRU00967"/>
    </source>
</evidence>
<evidence type="ECO:0000255" key="5">
    <source>
        <dbReference type="PROSITE-ProRule" id="PRU00968"/>
    </source>
</evidence>
<feature type="chain" id="PRO_0000060587" description="Cytochrome b">
    <location>
        <begin position="1"/>
        <end position="378"/>
    </location>
</feature>
<feature type="transmembrane region" description="Helical" evidence="2">
    <location>
        <begin position="34"/>
        <end position="54"/>
    </location>
</feature>
<feature type="transmembrane region" description="Helical" evidence="2">
    <location>
        <begin position="78"/>
        <end position="99"/>
    </location>
</feature>
<feature type="transmembrane region" description="Helical" evidence="2">
    <location>
        <begin position="114"/>
        <end position="134"/>
    </location>
</feature>
<feature type="transmembrane region" description="Helical" evidence="2">
    <location>
        <begin position="179"/>
        <end position="199"/>
    </location>
</feature>
<feature type="transmembrane region" description="Helical" evidence="2">
    <location>
        <begin position="227"/>
        <end position="247"/>
    </location>
</feature>
<feature type="transmembrane region" description="Helical" evidence="2">
    <location>
        <begin position="289"/>
        <end position="309"/>
    </location>
</feature>
<feature type="transmembrane region" description="Helical" evidence="2">
    <location>
        <begin position="321"/>
        <end position="341"/>
    </location>
</feature>
<feature type="transmembrane region" description="Helical" evidence="2">
    <location>
        <begin position="348"/>
        <end position="368"/>
    </location>
</feature>
<feature type="binding site" description="axial binding residue" evidence="2">
    <location>
        <position position="84"/>
    </location>
    <ligand>
        <name>heme b</name>
        <dbReference type="ChEBI" id="CHEBI:60344"/>
        <label>b562</label>
    </ligand>
    <ligandPart>
        <name>Fe</name>
        <dbReference type="ChEBI" id="CHEBI:18248"/>
    </ligandPart>
</feature>
<feature type="binding site" description="axial binding residue" evidence="2">
    <location>
        <position position="98"/>
    </location>
    <ligand>
        <name>heme b</name>
        <dbReference type="ChEBI" id="CHEBI:60344"/>
        <label>b566</label>
    </ligand>
    <ligandPart>
        <name>Fe</name>
        <dbReference type="ChEBI" id="CHEBI:18248"/>
    </ligandPart>
</feature>
<feature type="binding site" description="axial binding residue" evidence="2">
    <location>
        <position position="183"/>
    </location>
    <ligand>
        <name>heme b</name>
        <dbReference type="ChEBI" id="CHEBI:60344"/>
        <label>b562</label>
    </ligand>
    <ligandPart>
        <name>Fe</name>
        <dbReference type="ChEBI" id="CHEBI:18248"/>
    </ligandPart>
</feature>
<feature type="binding site" description="axial binding residue" evidence="2">
    <location>
        <position position="197"/>
    </location>
    <ligand>
        <name>heme b</name>
        <dbReference type="ChEBI" id="CHEBI:60344"/>
        <label>b566</label>
    </ligand>
    <ligandPart>
        <name>Fe</name>
        <dbReference type="ChEBI" id="CHEBI:18248"/>
    </ligandPart>
</feature>
<feature type="binding site" evidence="2">
    <location>
        <position position="202"/>
    </location>
    <ligand>
        <name>a ubiquinone</name>
        <dbReference type="ChEBI" id="CHEBI:16389"/>
    </ligand>
</feature>
<sequence>MFKPIRKTHPLISIANNALVDLPAPSNISAWWNFGSLLGLCLMLQILTGLFLAMHYAADIETAFNSVNHICRDVNNGWFLRICHANGASFFFACLFIHVGRGVYYESYLYHMTWNTGVIILFLTMATGFLGYVLPWGQMSFWGATVITNLLSAVPYLGMDLVQWIWGGFAVDNATLTRFFTFHFIFPFIILALMMIHLLFLHQTGSNNPLGLNSNVDKIPFHPYFIYKDIFGFIVFLWILVTFIWKFNYLLMDPENFIPANPLVTPVHIQPEWYFLFAYAILRSIPNKLGGVIALVLSIAILLILPFTHSSKFRGLQFYPLNQILFWNMVIVASLLTWIGARPVEDPYILTGQILTVLYFSYFIINPLLAKFWDKLLN</sequence>
<comment type="function">
    <text evidence="2">Component of the ubiquinol-cytochrome c reductase complex (complex III or cytochrome b-c1 complex) that is part of the mitochondrial respiratory chain. The b-c1 complex mediates electron transfer from ubiquinol to cytochrome c. Contributes to the generation of a proton gradient across the mitochondrial membrane that is then used for ATP synthesis.</text>
</comment>
<comment type="cofactor">
    <cofactor evidence="2">
        <name>heme b</name>
        <dbReference type="ChEBI" id="CHEBI:60344"/>
    </cofactor>
    <text evidence="2">Binds 2 heme b groups non-covalently.</text>
</comment>
<comment type="subunit">
    <text evidence="2">The main subunits of complex b-c1 are: cytochrome b, cytochrome c1 and the Rieske protein.</text>
</comment>
<comment type="subcellular location">
    <subcellularLocation>
        <location evidence="3">Mitochondrion inner membrane</location>
        <topology evidence="3">Multi-pass membrane protein</topology>
    </subcellularLocation>
</comment>
<comment type="miscellaneous">
    <text evidence="1">Heme 1 (or BL or b562) is low-potential and absorbs at about 562 nm, and heme 2 (or BH or b566) is high-potential and absorbs at about 566 nm.</text>
</comment>
<comment type="similarity">
    <text evidence="4 5">Belongs to the cytochrome b family.</text>
</comment>
<comment type="caution">
    <text evidence="2">The full-length protein contains only eight transmembrane helices, not nine as predicted by bioinformatics tools.</text>
</comment>
<geneLocation type="mitochondrion"/>
<protein>
    <recommendedName>
        <fullName>Cytochrome b</fullName>
    </recommendedName>
    <alternativeName>
        <fullName>Complex III subunit 3</fullName>
    </alternativeName>
    <alternativeName>
        <fullName>Complex III subunit III</fullName>
    </alternativeName>
    <alternativeName>
        <fullName>Cytochrome b-c1 complex subunit 3</fullName>
    </alternativeName>
    <alternativeName>
        <fullName>Ubiquinol-cytochrome-c reductase complex cytochrome b subunit</fullName>
    </alternativeName>
</protein>